<feature type="chain" id="PRO_1000186958" description="Siroheme synthase">
    <location>
        <begin position="1"/>
        <end position="457"/>
    </location>
</feature>
<feature type="region of interest" description="Precorrin-2 dehydrogenase /sirohydrochlorin ferrochelatase" evidence="1">
    <location>
        <begin position="1"/>
        <end position="204"/>
    </location>
</feature>
<feature type="region of interest" description="Uroporphyrinogen-III C-methyltransferase" evidence="1">
    <location>
        <begin position="216"/>
        <end position="457"/>
    </location>
</feature>
<feature type="active site" description="Proton acceptor" evidence="1">
    <location>
        <position position="248"/>
    </location>
</feature>
<feature type="active site" description="Proton donor" evidence="1">
    <location>
        <position position="270"/>
    </location>
</feature>
<feature type="binding site" evidence="1">
    <location>
        <begin position="22"/>
        <end position="23"/>
    </location>
    <ligand>
        <name>NAD(+)</name>
        <dbReference type="ChEBI" id="CHEBI:57540"/>
    </ligand>
</feature>
<feature type="binding site" evidence="1">
    <location>
        <begin position="43"/>
        <end position="44"/>
    </location>
    <ligand>
        <name>NAD(+)</name>
        <dbReference type="ChEBI" id="CHEBI:57540"/>
    </ligand>
</feature>
<feature type="binding site" evidence="1">
    <location>
        <position position="225"/>
    </location>
    <ligand>
        <name>S-adenosyl-L-methionine</name>
        <dbReference type="ChEBI" id="CHEBI:59789"/>
    </ligand>
</feature>
<feature type="binding site" evidence="1">
    <location>
        <begin position="301"/>
        <end position="303"/>
    </location>
    <ligand>
        <name>S-adenosyl-L-methionine</name>
        <dbReference type="ChEBI" id="CHEBI:59789"/>
    </ligand>
</feature>
<feature type="binding site" evidence="1">
    <location>
        <position position="306"/>
    </location>
    <ligand>
        <name>S-adenosyl-L-methionine</name>
        <dbReference type="ChEBI" id="CHEBI:59789"/>
    </ligand>
</feature>
<feature type="binding site" evidence="1">
    <location>
        <begin position="331"/>
        <end position="332"/>
    </location>
    <ligand>
        <name>S-adenosyl-L-methionine</name>
        <dbReference type="ChEBI" id="CHEBI:59789"/>
    </ligand>
</feature>
<feature type="binding site" evidence="1">
    <location>
        <position position="382"/>
    </location>
    <ligand>
        <name>S-adenosyl-L-methionine</name>
        <dbReference type="ChEBI" id="CHEBI:59789"/>
    </ligand>
</feature>
<feature type="binding site" evidence="1">
    <location>
        <position position="411"/>
    </location>
    <ligand>
        <name>S-adenosyl-L-methionine</name>
        <dbReference type="ChEBI" id="CHEBI:59789"/>
    </ligand>
</feature>
<feature type="modified residue" description="Phosphoserine" evidence="1">
    <location>
        <position position="128"/>
    </location>
</feature>
<proteinExistence type="inferred from homology"/>
<organism>
    <name type="scientific">Salmonella schwarzengrund (strain CVM19633)</name>
    <dbReference type="NCBI Taxonomy" id="439843"/>
    <lineage>
        <taxon>Bacteria</taxon>
        <taxon>Pseudomonadati</taxon>
        <taxon>Pseudomonadota</taxon>
        <taxon>Gammaproteobacteria</taxon>
        <taxon>Enterobacterales</taxon>
        <taxon>Enterobacteriaceae</taxon>
        <taxon>Salmonella</taxon>
    </lineage>
</organism>
<protein>
    <recommendedName>
        <fullName evidence="1">Siroheme synthase</fullName>
    </recommendedName>
    <domain>
        <recommendedName>
            <fullName evidence="1">Uroporphyrinogen-III C-methyltransferase</fullName>
            <shortName evidence="1">Urogen III methylase</shortName>
            <ecNumber evidence="1">2.1.1.107</ecNumber>
        </recommendedName>
        <alternativeName>
            <fullName evidence="1">SUMT</fullName>
        </alternativeName>
        <alternativeName>
            <fullName evidence="1">Uroporphyrinogen III methylase</fullName>
            <shortName evidence="1">UROM</shortName>
        </alternativeName>
    </domain>
    <domain>
        <recommendedName>
            <fullName evidence="1">Precorrin-2 dehydrogenase</fullName>
            <ecNumber evidence="1">1.3.1.76</ecNumber>
        </recommendedName>
    </domain>
    <domain>
        <recommendedName>
            <fullName evidence="1">Sirohydrochlorin ferrochelatase</fullName>
            <ecNumber evidence="1">4.99.1.4</ecNumber>
        </recommendedName>
    </domain>
</protein>
<sequence length="457" mass="50114">MDHLPIFCQLRDRDCLIVGGGDVAERKARLLLEAGARLTVNALTFIPQFTVWANEGMLTLVEGPFDETLLDSCWLAIAATDDDTVNQRVSEAAESRRIFCNVVDAPKAASFIMPSIIDRSPLMVAVSSGGTSPVLARLLREKLESLLPQHLGQVARYAGQLRARVKKQFATMGERRRFWEKFFVNDRLAQSLANADEKAVNATTEHLFSEPLDHRGEVVLVGAGPGDAGLLTLKGLQQIQQADIVVYDRLVSDDIMNLVRRDADRVFVGKRAGYHCVPQEEINQILLREAQKGKRVVRLKGGDPFIFGRGGEELETLCHAGIPFSVVPGITAASGCSAYSGIPLTHRDYAQSVRLVTGHLKTGGELDWENLAAEKQTLVFYMGLNQAATIQDKLIAFGMQADMPVALVENGTSVKQRVVHGVLTQLGELAQQVESPALIIVGRVVGLRDKLNWFSNH</sequence>
<name>CYSG_SALSV</name>
<evidence type="ECO:0000255" key="1">
    <source>
        <dbReference type="HAMAP-Rule" id="MF_01646"/>
    </source>
</evidence>
<gene>
    <name evidence="1" type="primary">cysG</name>
    <name type="ordered locus">SeSA_A3675</name>
</gene>
<dbReference type="EC" id="2.1.1.107" evidence="1"/>
<dbReference type="EC" id="1.3.1.76" evidence="1"/>
<dbReference type="EC" id="4.99.1.4" evidence="1"/>
<dbReference type="EMBL" id="CP001127">
    <property type="protein sequence ID" value="ACF89641.1"/>
    <property type="molecule type" value="Genomic_DNA"/>
</dbReference>
<dbReference type="RefSeq" id="WP_000349902.1">
    <property type="nucleotide sequence ID" value="NC_011094.1"/>
</dbReference>
<dbReference type="SMR" id="B4TY38"/>
<dbReference type="KEGG" id="sew:SeSA_A3675"/>
<dbReference type="HOGENOM" id="CLU_011276_2_0_6"/>
<dbReference type="UniPathway" id="UPA00148">
    <property type="reaction ID" value="UER00211"/>
</dbReference>
<dbReference type="UniPathway" id="UPA00148">
    <property type="reaction ID" value="UER00222"/>
</dbReference>
<dbReference type="UniPathway" id="UPA00262">
    <property type="reaction ID" value="UER00211"/>
</dbReference>
<dbReference type="UniPathway" id="UPA00262">
    <property type="reaction ID" value="UER00222"/>
</dbReference>
<dbReference type="UniPathway" id="UPA00262">
    <property type="reaction ID" value="UER00376"/>
</dbReference>
<dbReference type="Proteomes" id="UP000001865">
    <property type="component" value="Chromosome"/>
</dbReference>
<dbReference type="GO" id="GO:0051287">
    <property type="term" value="F:NAD binding"/>
    <property type="evidence" value="ECO:0007669"/>
    <property type="project" value="InterPro"/>
</dbReference>
<dbReference type="GO" id="GO:0043115">
    <property type="term" value="F:precorrin-2 dehydrogenase activity"/>
    <property type="evidence" value="ECO:0007669"/>
    <property type="project" value="UniProtKB-UniRule"/>
</dbReference>
<dbReference type="GO" id="GO:0051266">
    <property type="term" value="F:sirohydrochlorin ferrochelatase activity"/>
    <property type="evidence" value="ECO:0007669"/>
    <property type="project" value="UniProtKB-EC"/>
</dbReference>
<dbReference type="GO" id="GO:0004851">
    <property type="term" value="F:uroporphyrin-III C-methyltransferase activity"/>
    <property type="evidence" value="ECO:0007669"/>
    <property type="project" value="UniProtKB-UniRule"/>
</dbReference>
<dbReference type="GO" id="GO:0009236">
    <property type="term" value="P:cobalamin biosynthetic process"/>
    <property type="evidence" value="ECO:0007669"/>
    <property type="project" value="UniProtKB-UniRule"/>
</dbReference>
<dbReference type="GO" id="GO:0032259">
    <property type="term" value="P:methylation"/>
    <property type="evidence" value="ECO:0007669"/>
    <property type="project" value="UniProtKB-KW"/>
</dbReference>
<dbReference type="GO" id="GO:0019354">
    <property type="term" value="P:siroheme biosynthetic process"/>
    <property type="evidence" value="ECO:0007669"/>
    <property type="project" value="UniProtKB-UniRule"/>
</dbReference>
<dbReference type="CDD" id="cd11642">
    <property type="entry name" value="SUMT"/>
    <property type="match status" value="1"/>
</dbReference>
<dbReference type="FunFam" id="1.10.8.210:FF:000001">
    <property type="entry name" value="Siroheme synthase"/>
    <property type="match status" value="1"/>
</dbReference>
<dbReference type="FunFam" id="3.30.160.110:FF:000001">
    <property type="entry name" value="Siroheme synthase"/>
    <property type="match status" value="1"/>
</dbReference>
<dbReference type="FunFam" id="3.30.950.10:FF:000001">
    <property type="entry name" value="Siroheme synthase"/>
    <property type="match status" value="1"/>
</dbReference>
<dbReference type="FunFam" id="3.40.1010.10:FF:000001">
    <property type="entry name" value="Siroheme synthase"/>
    <property type="match status" value="1"/>
</dbReference>
<dbReference type="FunFam" id="3.40.50.720:FF:000092">
    <property type="entry name" value="Siroheme synthase"/>
    <property type="match status" value="1"/>
</dbReference>
<dbReference type="Gene3D" id="3.40.1010.10">
    <property type="entry name" value="Cobalt-precorrin-4 Transmethylase, Domain 1"/>
    <property type="match status" value="1"/>
</dbReference>
<dbReference type="Gene3D" id="3.30.950.10">
    <property type="entry name" value="Methyltransferase, Cobalt-precorrin-4 Transmethylase, Domain 2"/>
    <property type="match status" value="1"/>
</dbReference>
<dbReference type="Gene3D" id="3.40.50.720">
    <property type="entry name" value="NAD(P)-binding Rossmann-like Domain"/>
    <property type="match status" value="1"/>
</dbReference>
<dbReference type="Gene3D" id="1.10.8.210">
    <property type="entry name" value="Sirohaem synthase, dimerisation domain"/>
    <property type="match status" value="1"/>
</dbReference>
<dbReference type="Gene3D" id="3.30.160.110">
    <property type="entry name" value="Siroheme synthase, domain 2"/>
    <property type="match status" value="1"/>
</dbReference>
<dbReference type="HAMAP" id="MF_01646">
    <property type="entry name" value="Siroheme_synth"/>
    <property type="match status" value="1"/>
</dbReference>
<dbReference type="InterPro" id="IPR000878">
    <property type="entry name" value="4pyrrol_Mease"/>
</dbReference>
<dbReference type="InterPro" id="IPR035996">
    <property type="entry name" value="4pyrrol_Methylase_sf"/>
</dbReference>
<dbReference type="InterPro" id="IPR014777">
    <property type="entry name" value="4pyrrole_Mease_sub1"/>
</dbReference>
<dbReference type="InterPro" id="IPR014776">
    <property type="entry name" value="4pyrrole_Mease_sub2"/>
</dbReference>
<dbReference type="InterPro" id="IPR006366">
    <property type="entry name" value="CobA/CysG_C"/>
</dbReference>
<dbReference type="InterPro" id="IPR036291">
    <property type="entry name" value="NAD(P)-bd_dom_sf"/>
</dbReference>
<dbReference type="InterPro" id="IPR050161">
    <property type="entry name" value="Siro_Cobalamin_biosynth"/>
</dbReference>
<dbReference type="InterPro" id="IPR037115">
    <property type="entry name" value="Sirohaem_synt_dimer_dom_sf"/>
</dbReference>
<dbReference type="InterPro" id="IPR012409">
    <property type="entry name" value="Sirohaem_synth"/>
</dbReference>
<dbReference type="InterPro" id="IPR028281">
    <property type="entry name" value="Sirohaem_synthase_central"/>
</dbReference>
<dbReference type="InterPro" id="IPR019478">
    <property type="entry name" value="Sirohaem_synthase_dimer_dom"/>
</dbReference>
<dbReference type="InterPro" id="IPR006367">
    <property type="entry name" value="Sirohaem_synthase_N"/>
</dbReference>
<dbReference type="InterPro" id="IPR003043">
    <property type="entry name" value="Uropor_MeTrfase_CS"/>
</dbReference>
<dbReference type="NCBIfam" id="TIGR01469">
    <property type="entry name" value="cobA_cysG_Cterm"/>
    <property type="match status" value="1"/>
</dbReference>
<dbReference type="NCBIfam" id="TIGR01470">
    <property type="entry name" value="cysG_Nterm"/>
    <property type="match status" value="1"/>
</dbReference>
<dbReference type="NCBIfam" id="NF004790">
    <property type="entry name" value="PRK06136.1"/>
    <property type="match status" value="1"/>
</dbReference>
<dbReference type="NCBIfam" id="NF007922">
    <property type="entry name" value="PRK10637.1"/>
    <property type="match status" value="1"/>
</dbReference>
<dbReference type="PANTHER" id="PTHR45790:SF1">
    <property type="entry name" value="SIROHEME SYNTHASE"/>
    <property type="match status" value="1"/>
</dbReference>
<dbReference type="PANTHER" id="PTHR45790">
    <property type="entry name" value="SIROHEME SYNTHASE-RELATED"/>
    <property type="match status" value="1"/>
</dbReference>
<dbReference type="Pfam" id="PF10414">
    <property type="entry name" value="CysG_dimeriser"/>
    <property type="match status" value="1"/>
</dbReference>
<dbReference type="Pfam" id="PF13241">
    <property type="entry name" value="NAD_binding_7"/>
    <property type="match status" value="1"/>
</dbReference>
<dbReference type="Pfam" id="PF14824">
    <property type="entry name" value="Sirohm_synth_M"/>
    <property type="match status" value="1"/>
</dbReference>
<dbReference type="Pfam" id="PF00590">
    <property type="entry name" value="TP_methylase"/>
    <property type="match status" value="1"/>
</dbReference>
<dbReference type="PIRSF" id="PIRSF036426">
    <property type="entry name" value="Sirohaem_synth"/>
    <property type="match status" value="1"/>
</dbReference>
<dbReference type="SUPFAM" id="SSF51735">
    <property type="entry name" value="NAD(P)-binding Rossmann-fold domains"/>
    <property type="match status" value="1"/>
</dbReference>
<dbReference type="SUPFAM" id="SSF75615">
    <property type="entry name" value="Siroheme synthase middle domains-like"/>
    <property type="match status" value="1"/>
</dbReference>
<dbReference type="SUPFAM" id="SSF53790">
    <property type="entry name" value="Tetrapyrrole methylase"/>
    <property type="match status" value="1"/>
</dbReference>
<dbReference type="PROSITE" id="PS00839">
    <property type="entry name" value="SUMT_1"/>
    <property type="match status" value="1"/>
</dbReference>
<dbReference type="PROSITE" id="PS00840">
    <property type="entry name" value="SUMT_2"/>
    <property type="match status" value="1"/>
</dbReference>
<keyword id="KW-0169">Cobalamin biosynthesis</keyword>
<keyword id="KW-0456">Lyase</keyword>
<keyword id="KW-0489">Methyltransferase</keyword>
<keyword id="KW-0511">Multifunctional enzyme</keyword>
<keyword id="KW-0520">NAD</keyword>
<keyword id="KW-0560">Oxidoreductase</keyword>
<keyword id="KW-0597">Phosphoprotein</keyword>
<keyword id="KW-0627">Porphyrin biosynthesis</keyword>
<keyword id="KW-0949">S-adenosyl-L-methionine</keyword>
<keyword id="KW-0808">Transferase</keyword>
<reference key="1">
    <citation type="journal article" date="2011" name="J. Bacteriol.">
        <title>Comparative genomics of 28 Salmonella enterica isolates: evidence for CRISPR-mediated adaptive sublineage evolution.</title>
        <authorList>
            <person name="Fricke W.F."/>
            <person name="Mammel M.K."/>
            <person name="McDermott P.F."/>
            <person name="Tartera C."/>
            <person name="White D.G."/>
            <person name="Leclerc J.E."/>
            <person name="Ravel J."/>
            <person name="Cebula T.A."/>
        </authorList>
    </citation>
    <scope>NUCLEOTIDE SEQUENCE [LARGE SCALE GENOMIC DNA]</scope>
    <source>
        <strain>CVM19633</strain>
    </source>
</reference>
<comment type="function">
    <text evidence="1">Multifunctional enzyme that catalyzes the SAM-dependent methylations of uroporphyrinogen III at position C-2 and C-7 to form precorrin-2 via precorrin-1. Then it catalyzes the NAD-dependent ring dehydrogenation of precorrin-2 to yield sirohydrochlorin. Finally, it catalyzes the ferrochelation of sirohydrochlorin to yield siroheme.</text>
</comment>
<comment type="catalytic activity">
    <reaction evidence="1">
        <text>uroporphyrinogen III + 2 S-adenosyl-L-methionine = precorrin-2 + 2 S-adenosyl-L-homocysteine + H(+)</text>
        <dbReference type="Rhea" id="RHEA:32459"/>
        <dbReference type="ChEBI" id="CHEBI:15378"/>
        <dbReference type="ChEBI" id="CHEBI:57308"/>
        <dbReference type="ChEBI" id="CHEBI:57856"/>
        <dbReference type="ChEBI" id="CHEBI:58827"/>
        <dbReference type="ChEBI" id="CHEBI:59789"/>
        <dbReference type="EC" id="2.1.1.107"/>
    </reaction>
</comment>
<comment type="catalytic activity">
    <reaction evidence="1">
        <text>precorrin-2 + NAD(+) = sirohydrochlorin + NADH + 2 H(+)</text>
        <dbReference type="Rhea" id="RHEA:15613"/>
        <dbReference type="ChEBI" id="CHEBI:15378"/>
        <dbReference type="ChEBI" id="CHEBI:57540"/>
        <dbReference type="ChEBI" id="CHEBI:57945"/>
        <dbReference type="ChEBI" id="CHEBI:58351"/>
        <dbReference type="ChEBI" id="CHEBI:58827"/>
        <dbReference type="EC" id="1.3.1.76"/>
    </reaction>
</comment>
<comment type="catalytic activity">
    <reaction evidence="1">
        <text>siroheme + 2 H(+) = sirohydrochlorin + Fe(2+)</text>
        <dbReference type="Rhea" id="RHEA:24360"/>
        <dbReference type="ChEBI" id="CHEBI:15378"/>
        <dbReference type="ChEBI" id="CHEBI:29033"/>
        <dbReference type="ChEBI" id="CHEBI:58351"/>
        <dbReference type="ChEBI" id="CHEBI:60052"/>
        <dbReference type="EC" id="4.99.1.4"/>
    </reaction>
</comment>
<comment type="pathway">
    <text evidence="1">Cofactor biosynthesis; adenosylcobalamin biosynthesis; precorrin-2 from uroporphyrinogen III: step 1/1.</text>
</comment>
<comment type="pathway">
    <text evidence="1">Cofactor biosynthesis; adenosylcobalamin biosynthesis; sirohydrochlorin from precorrin-2: step 1/1.</text>
</comment>
<comment type="pathway">
    <text evidence="1">Porphyrin-containing compound metabolism; siroheme biosynthesis; precorrin-2 from uroporphyrinogen III: step 1/1.</text>
</comment>
<comment type="pathway">
    <text evidence="1">Porphyrin-containing compound metabolism; siroheme biosynthesis; siroheme from sirohydrochlorin: step 1/1.</text>
</comment>
<comment type="pathway">
    <text evidence="1">Porphyrin-containing compound metabolism; siroheme biosynthesis; sirohydrochlorin from precorrin-2: step 1/1.</text>
</comment>
<comment type="similarity">
    <text evidence="1">In the N-terminal section; belongs to the precorrin-2 dehydrogenase / sirohydrochlorin ferrochelatase family.</text>
</comment>
<comment type="similarity">
    <text evidence="1">In the C-terminal section; belongs to the precorrin methyltransferase family.</text>
</comment>
<accession>B4TY38</accession>